<organism>
    <name type="scientific">Prochlorococcus marinus (strain MIT 9303)</name>
    <dbReference type="NCBI Taxonomy" id="59922"/>
    <lineage>
        <taxon>Bacteria</taxon>
        <taxon>Bacillati</taxon>
        <taxon>Cyanobacteriota</taxon>
        <taxon>Cyanophyceae</taxon>
        <taxon>Synechococcales</taxon>
        <taxon>Prochlorococcaceae</taxon>
        <taxon>Prochlorococcus</taxon>
    </lineage>
</organism>
<name>RPOB_PROM3</name>
<protein>
    <recommendedName>
        <fullName evidence="1">DNA-directed RNA polymerase subunit beta</fullName>
        <shortName evidence="1">RNAP subunit beta</shortName>
        <ecNumber evidence="1">2.7.7.6</ecNumber>
    </recommendedName>
    <alternativeName>
        <fullName evidence="1">RNA polymerase subunit beta</fullName>
    </alternativeName>
    <alternativeName>
        <fullName evidence="1">Transcriptase subunit beta</fullName>
    </alternativeName>
</protein>
<evidence type="ECO:0000255" key="1">
    <source>
        <dbReference type="HAMAP-Rule" id="MF_01321"/>
    </source>
</evidence>
<evidence type="ECO:0000256" key="2">
    <source>
        <dbReference type="SAM" id="MobiDB-lite"/>
    </source>
</evidence>
<feature type="chain" id="PRO_0000300371" description="DNA-directed RNA polymerase subunit beta">
    <location>
        <begin position="1"/>
        <end position="1097"/>
    </location>
</feature>
<feature type="region of interest" description="Disordered" evidence="2">
    <location>
        <begin position="1072"/>
        <end position="1097"/>
    </location>
</feature>
<dbReference type="EC" id="2.7.7.6" evidence="1"/>
<dbReference type="EMBL" id="CP000554">
    <property type="protein sequence ID" value="ABM77188.1"/>
    <property type="molecule type" value="Genomic_DNA"/>
</dbReference>
<dbReference type="RefSeq" id="WP_011825113.1">
    <property type="nucleotide sequence ID" value="NC_008820.1"/>
</dbReference>
<dbReference type="SMR" id="A2C6S8"/>
<dbReference type="STRING" id="59922.P9303_04361"/>
<dbReference type="KEGG" id="pmf:P9303_04361"/>
<dbReference type="HOGENOM" id="CLU_000524_4_1_3"/>
<dbReference type="BioCyc" id="PMAR59922:G1G80-405-MONOMER"/>
<dbReference type="Proteomes" id="UP000002274">
    <property type="component" value="Chromosome"/>
</dbReference>
<dbReference type="GO" id="GO:0000428">
    <property type="term" value="C:DNA-directed RNA polymerase complex"/>
    <property type="evidence" value="ECO:0007669"/>
    <property type="project" value="UniProtKB-KW"/>
</dbReference>
<dbReference type="GO" id="GO:0003677">
    <property type="term" value="F:DNA binding"/>
    <property type="evidence" value="ECO:0007669"/>
    <property type="project" value="UniProtKB-UniRule"/>
</dbReference>
<dbReference type="GO" id="GO:0003899">
    <property type="term" value="F:DNA-directed RNA polymerase activity"/>
    <property type="evidence" value="ECO:0007669"/>
    <property type="project" value="UniProtKB-UniRule"/>
</dbReference>
<dbReference type="GO" id="GO:0032549">
    <property type="term" value="F:ribonucleoside binding"/>
    <property type="evidence" value="ECO:0007669"/>
    <property type="project" value="InterPro"/>
</dbReference>
<dbReference type="GO" id="GO:0006351">
    <property type="term" value="P:DNA-templated transcription"/>
    <property type="evidence" value="ECO:0007669"/>
    <property type="project" value="UniProtKB-UniRule"/>
</dbReference>
<dbReference type="CDD" id="cd00653">
    <property type="entry name" value="RNA_pol_B_RPB2"/>
    <property type="match status" value="1"/>
</dbReference>
<dbReference type="FunFam" id="3.90.1800.10:FF:000001">
    <property type="entry name" value="DNA-directed RNA polymerase subunit beta"/>
    <property type="match status" value="1"/>
</dbReference>
<dbReference type="Gene3D" id="2.40.50.100">
    <property type="match status" value="1"/>
</dbReference>
<dbReference type="Gene3D" id="2.40.50.150">
    <property type="match status" value="1"/>
</dbReference>
<dbReference type="Gene3D" id="3.90.1100.10">
    <property type="match status" value="1"/>
</dbReference>
<dbReference type="Gene3D" id="2.30.150.10">
    <property type="entry name" value="DNA-directed RNA polymerase, beta subunit, external 1 domain"/>
    <property type="match status" value="1"/>
</dbReference>
<dbReference type="Gene3D" id="2.40.270.10">
    <property type="entry name" value="DNA-directed RNA polymerase, subunit 2, domain 6"/>
    <property type="match status" value="1"/>
</dbReference>
<dbReference type="Gene3D" id="3.90.1800.10">
    <property type="entry name" value="RNA polymerase alpha subunit dimerisation domain"/>
    <property type="match status" value="1"/>
</dbReference>
<dbReference type="Gene3D" id="3.90.1110.10">
    <property type="entry name" value="RNA polymerase Rpb2, domain 2"/>
    <property type="match status" value="1"/>
</dbReference>
<dbReference type="HAMAP" id="MF_01321">
    <property type="entry name" value="RNApol_bact_RpoB"/>
    <property type="match status" value="1"/>
</dbReference>
<dbReference type="InterPro" id="IPR042107">
    <property type="entry name" value="DNA-dir_RNA_pol_bsu_ext_1_sf"/>
</dbReference>
<dbReference type="InterPro" id="IPR019462">
    <property type="entry name" value="DNA-dir_RNA_pol_bsu_external_1"/>
</dbReference>
<dbReference type="InterPro" id="IPR015712">
    <property type="entry name" value="DNA-dir_RNA_pol_su2"/>
</dbReference>
<dbReference type="InterPro" id="IPR007120">
    <property type="entry name" value="DNA-dir_RNAP_su2_dom"/>
</dbReference>
<dbReference type="InterPro" id="IPR037033">
    <property type="entry name" value="DNA-dir_RNAP_su2_hyb_sf"/>
</dbReference>
<dbReference type="InterPro" id="IPR010243">
    <property type="entry name" value="RNA_pol_bsu_bac"/>
</dbReference>
<dbReference type="InterPro" id="IPR007121">
    <property type="entry name" value="RNA_pol_bsu_CS"/>
</dbReference>
<dbReference type="InterPro" id="IPR007644">
    <property type="entry name" value="RNA_pol_bsu_protrusion"/>
</dbReference>
<dbReference type="InterPro" id="IPR007642">
    <property type="entry name" value="RNA_pol_Rpb2_2"/>
</dbReference>
<dbReference type="InterPro" id="IPR037034">
    <property type="entry name" value="RNA_pol_Rpb2_2_sf"/>
</dbReference>
<dbReference type="InterPro" id="IPR007645">
    <property type="entry name" value="RNA_pol_Rpb2_3"/>
</dbReference>
<dbReference type="InterPro" id="IPR007641">
    <property type="entry name" value="RNA_pol_Rpb2_7"/>
</dbReference>
<dbReference type="InterPro" id="IPR014724">
    <property type="entry name" value="RNA_pol_RPB2_OB-fold"/>
</dbReference>
<dbReference type="NCBIfam" id="NF001616">
    <property type="entry name" value="PRK00405.1"/>
    <property type="match status" value="1"/>
</dbReference>
<dbReference type="NCBIfam" id="TIGR02013">
    <property type="entry name" value="rpoB"/>
    <property type="match status" value="1"/>
</dbReference>
<dbReference type="PANTHER" id="PTHR20856">
    <property type="entry name" value="DNA-DIRECTED RNA POLYMERASE I SUBUNIT 2"/>
    <property type="match status" value="1"/>
</dbReference>
<dbReference type="Pfam" id="PF04563">
    <property type="entry name" value="RNA_pol_Rpb2_1"/>
    <property type="match status" value="1"/>
</dbReference>
<dbReference type="Pfam" id="PF04561">
    <property type="entry name" value="RNA_pol_Rpb2_2"/>
    <property type="match status" value="1"/>
</dbReference>
<dbReference type="Pfam" id="PF04565">
    <property type="entry name" value="RNA_pol_Rpb2_3"/>
    <property type="match status" value="1"/>
</dbReference>
<dbReference type="Pfam" id="PF10385">
    <property type="entry name" value="RNA_pol_Rpb2_45"/>
    <property type="match status" value="1"/>
</dbReference>
<dbReference type="Pfam" id="PF00562">
    <property type="entry name" value="RNA_pol_Rpb2_6"/>
    <property type="match status" value="1"/>
</dbReference>
<dbReference type="Pfam" id="PF04560">
    <property type="entry name" value="RNA_pol_Rpb2_7"/>
    <property type="match status" value="1"/>
</dbReference>
<dbReference type="SUPFAM" id="SSF64484">
    <property type="entry name" value="beta and beta-prime subunits of DNA dependent RNA-polymerase"/>
    <property type="match status" value="1"/>
</dbReference>
<dbReference type="PROSITE" id="PS01166">
    <property type="entry name" value="RNA_POL_BETA"/>
    <property type="match status" value="1"/>
</dbReference>
<proteinExistence type="inferred from homology"/>
<accession>A2C6S8</accession>
<sequence>MSSSAIQVAKTATYLPDLVEVQRASFKWFLDEGLIEELDSFSPITDYTGKLELHFVGNEYRLKRPRHDVEEAKRRDATFASQMYVTCRLVNKETGEIKEQEVFIGELPLMTERGTFIINGAERVIVNQIVRSPGVYFKDEQDKNGRRTYNASVIPNRGAWLKFETDKNDLLHVRVDKTRKINAHVLMRAMGLSDNDVIDKLRHPEYYKKSIEAANEEGISSEDQALLELYKKLRPGEPPSVSGGQQLLQTRFFDPKRYDLGRVGRYKINKKLRLTIPDTVRTLTHEDVLSTLDYLINLELDVGGASLDDIDHLGNRRVRSVGELLQNQVRVGLNRLERIIKERMTVGETDSLTPAQLVNPKPLVAAVKEFFGSSQLSQFMDQTNPLAELTHKRRISALGPGGLTRERAGFAVRDIHPSHYGRLCPIETPEGPNAGLINSLATHARVNQYGFIETPFWKVENGRLIKEGDPIYLSADLEDECRVAPGDVATDADGQILAELIPVRYRQDFEKVPPEQVDYVQLSPVQVISVATSLIPFLEHDDANRALMGSNMQRQAVPLLRPERPLVGTGLETQVARDSGMVPISRVNGMVTFVDATAIIVRDEDGVDHTHYLQKYQRSNQDTCLNQRPIVCQGDPVIVGQVLADGSACEGGEIALGQNVLVAYMPWEGYNYEDAILVSERLVKDDLYTSVHIEKYEIEARQTKLGPEEITREIPNVAEESLGNLDEMGIIRIGAFVESGDILVGKVTPKGESDQPPEEKLLRAIFGEKARDVRDNSLRVPSTERGRVVDVRIYTREQGDELPPGANMVARVYVAQRRKIQVGDKMAGRHGNKGIISRILPREDMPFLPDGTPVDIVLNPLGVPSRMNVGQVFECLMGWAAANLDCRVKVVPFDEMYGAEKSQQTVEAYLKEAAKQPGKEWVYNPENPGKLQLIDGRSGEPFDQPVTVGYAQILKLVHLVDDKIHARSTGPYSLVTQQPLGGKAQQGGQRLGEMEVWALEAYGAAYTLQELLTVKSDDMQGRNEALNAIVKGKPIPRPGTPESFKVLMRELQSLGLDIAVYTDEGKEVDLMQDVNPRRSTPSRPTYESLGVADYDED</sequence>
<comment type="function">
    <text evidence="1">DNA-dependent RNA polymerase catalyzes the transcription of DNA into RNA using the four ribonucleoside triphosphates as substrates.</text>
</comment>
<comment type="catalytic activity">
    <reaction evidence="1">
        <text>RNA(n) + a ribonucleoside 5'-triphosphate = RNA(n+1) + diphosphate</text>
        <dbReference type="Rhea" id="RHEA:21248"/>
        <dbReference type="Rhea" id="RHEA-COMP:14527"/>
        <dbReference type="Rhea" id="RHEA-COMP:17342"/>
        <dbReference type="ChEBI" id="CHEBI:33019"/>
        <dbReference type="ChEBI" id="CHEBI:61557"/>
        <dbReference type="ChEBI" id="CHEBI:140395"/>
        <dbReference type="EC" id="2.7.7.6"/>
    </reaction>
</comment>
<comment type="subunit">
    <text evidence="1">In cyanobacteria the RNAP catalytic core is composed of 2 alpha, 1 beta, 1 beta', 1 gamma and 1 omega subunit. When a sigma factor is associated with the core the holoenzyme is formed, which can initiate transcription.</text>
</comment>
<comment type="similarity">
    <text evidence="1">Belongs to the RNA polymerase beta chain family.</text>
</comment>
<keyword id="KW-0240">DNA-directed RNA polymerase</keyword>
<keyword id="KW-0548">Nucleotidyltransferase</keyword>
<keyword id="KW-0804">Transcription</keyword>
<keyword id="KW-0808">Transferase</keyword>
<gene>
    <name evidence="1" type="primary">rpoB</name>
    <name type="ordered locus">P9303_04361</name>
</gene>
<reference key="1">
    <citation type="journal article" date="2007" name="PLoS Genet.">
        <title>Patterns and implications of gene gain and loss in the evolution of Prochlorococcus.</title>
        <authorList>
            <person name="Kettler G.C."/>
            <person name="Martiny A.C."/>
            <person name="Huang K."/>
            <person name="Zucker J."/>
            <person name="Coleman M.L."/>
            <person name="Rodrigue S."/>
            <person name="Chen F."/>
            <person name="Lapidus A."/>
            <person name="Ferriera S."/>
            <person name="Johnson J."/>
            <person name="Steglich C."/>
            <person name="Church G.M."/>
            <person name="Richardson P."/>
            <person name="Chisholm S.W."/>
        </authorList>
    </citation>
    <scope>NUCLEOTIDE SEQUENCE [LARGE SCALE GENOMIC DNA]</scope>
    <source>
        <strain>MIT 9303</strain>
    </source>
</reference>